<sequence>MKKFAIKFIAFYQKYISILLPKSCRYYPTCSQYAIWEFQTNSFFSAFFATFMRILRCNQLFKGGINYPIIRKKFNSCFIFQKSDTKNVNFWFIPCQNSKFYVVKVLDKLKEKN</sequence>
<protein>
    <recommendedName>
        <fullName evidence="1">Putative membrane protein insertion efficiency factor</fullName>
    </recommendedName>
</protein>
<comment type="function">
    <text evidence="1">Could be involved in insertion of integral membrane proteins into the membrane.</text>
</comment>
<comment type="subcellular location">
    <subcellularLocation>
        <location evidence="1">Cell inner membrane</location>
        <topology evidence="1">Peripheral membrane protein</topology>
        <orientation evidence="1">Cytoplasmic side</orientation>
    </subcellularLocation>
</comment>
<comment type="similarity">
    <text evidence="1">Belongs to the UPF0161 family.</text>
</comment>
<feature type="chain" id="PRO_1000013076" description="Putative membrane protein insertion efficiency factor">
    <location>
        <begin position="1"/>
        <end position="113"/>
    </location>
</feature>
<accession>A7ZCY8</accession>
<name>YIDD_CAMC1</name>
<organism>
    <name type="scientific">Campylobacter concisus (strain 13826)</name>
    <dbReference type="NCBI Taxonomy" id="360104"/>
    <lineage>
        <taxon>Bacteria</taxon>
        <taxon>Pseudomonadati</taxon>
        <taxon>Campylobacterota</taxon>
        <taxon>Epsilonproteobacteria</taxon>
        <taxon>Campylobacterales</taxon>
        <taxon>Campylobacteraceae</taxon>
        <taxon>Campylobacter</taxon>
    </lineage>
</organism>
<evidence type="ECO:0000255" key="1">
    <source>
        <dbReference type="HAMAP-Rule" id="MF_00386"/>
    </source>
</evidence>
<proteinExistence type="inferred from homology"/>
<gene>
    <name type="ordered locus">Ccon26_07710</name>
    <name type="ORF">CCC13826_1622</name>
</gene>
<reference key="1">
    <citation type="submission" date="2007-10" db="EMBL/GenBank/DDBJ databases">
        <title>Genome sequence of Campylobacter concisus 13826 isolated from human feces.</title>
        <authorList>
            <person name="Fouts D.E."/>
            <person name="Mongodin E.F."/>
            <person name="Puiu D."/>
            <person name="Sebastian Y."/>
            <person name="Miller W.G."/>
            <person name="Mandrell R.E."/>
            <person name="On S."/>
            <person name="Nelson K.E."/>
        </authorList>
    </citation>
    <scope>NUCLEOTIDE SEQUENCE [LARGE SCALE GENOMIC DNA]</scope>
    <source>
        <strain>13826</strain>
    </source>
</reference>
<keyword id="KW-0997">Cell inner membrane</keyword>
<keyword id="KW-1003">Cell membrane</keyword>
<keyword id="KW-0472">Membrane</keyword>
<dbReference type="EMBL" id="CP000792">
    <property type="protein sequence ID" value="EAT97432.1"/>
    <property type="molecule type" value="Genomic_DNA"/>
</dbReference>
<dbReference type="STRING" id="360104.CCC13826_1622"/>
<dbReference type="KEGG" id="cco:CCC13826_1622"/>
<dbReference type="eggNOG" id="COG0759">
    <property type="taxonomic scope" value="Bacteria"/>
</dbReference>
<dbReference type="HOGENOM" id="CLU_144811_4_0_7"/>
<dbReference type="OrthoDB" id="9801753at2"/>
<dbReference type="Proteomes" id="UP000001121">
    <property type="component" value="Chromosome"/>
</dbReference>
<dbReference type="GO" id="GO:0005886">
    <property type="term" value="C:plasma membrane"/>
    <property type="evidence" value="ECO:0007669"/>
    <property type="project" value="UniProtKB-SubCell"/>
</dbReference>
<dbReference type="HAMAP" id="MF_00386">
    <property type="entry name" value="UPF0161_YidD"/>
    <property type="match status" value="1"/>
</dbReference>
<dbReference type="InterPro" id="IPR002696">
    <property type="entry name" value="Membr_insert_effic_factor_YidD"/>
</dbReference>
<dbReference type="NCBIfam" id="TIGR00278">
    <property type="entry name" value="membrane protein insertion efficiency factor YidD"/>
    <property type="match status" value="1"/>
</dbReference>
<dbReference type="PANTHER" id="PTHR33383">
    <property type="entry name" value="MEMBRANE PROTEIN INSERTION EFFICIENCY FACTOR-RELATED"/>
    <property type="match status" value="1"/>
</dbReference>
<dbReference type="PANTHER" id="PTHR33383:SF1">
    <property type="entry name" value="MEMBRANE PROTEIN INSERTION EFFICIENCY FACTOR-RELATED"/>
    <property type="match status" value="1"/>
</dbReference>
<dbReference type="Pfam" id="PF01809">
    <property type="entry name" value="YidD"/>
    <property type="match status" value="1"/>
</dbReference>
<dbReference type="SMART" id="SM01234">
    <property type="entry name" value="Haemolytic"/>
    <property type="match status" value="1"/>
</dbReference>